<organism>
    <name type="scientific">Aspergillus terreus (strain NIH 2624 / FGSC A1156)</name>
    <dbReference type="NCBI Taxonomy" id="341663"/>
    <lineage>
        <taxon>Eukaryota</taxon>
        <taxon>Fungi</taxon>
        <taxon>Dikarya</taxon>
        <taxon>Ascomycota</taxon>
        <taxon>Pezizomycotina</taxon>
        <taxon>Eurotiomycetes</taxon>
        <taxon>Eurotiomycetidae</taxon>
        <taxon>Eurotiales</taxon>
        <taxon>Aspergillaceae</taxon>
        <taxon>Aspergillus</taxon>
        <taxon>Aspergillus subgen. Circumdati</taxon>
    </lineage>
</organism>
<keyword id="KW-0961">Cell wall biogenesis/degradation</keyword>
<keyword id="KW-1015">Disulfide bond</keyword>
<keyword id="KW-0325">Glycoprotein</keyword>
<keyword id="KW-0326">Glycosidase</keyword>
<keyword id="KW-0378">Hydrolase</keyword>
<keyword id="KW-1185">Reference proteome</keyword>
<keyword id="KW-0677">Repeat</keyword>
<keyword id="KW-0964">Secreted</keyword>
<keyword id="KW-0732">Signal</keyword>
<accession>Q0C7H7</accession>
<reference key="1">
    <citation type="submission" date="2005-09" db="EMBL/GenBank/DDBJ databases">
        <title>Annotation of the Aspergillus terreus NIH2624 genome.</title>
        <authorList>
            <person name="Birren B.W."/>
            <person name="Lander E.S."/>
            <person name="Galagan J.E."/>
            <person name="Nusbaum C."/>
            <person name="Devon K."/>
            <person name="Henn M."/>
            <person name="Ma L.-J."/>
            <person name="Jaffe D.B."/>
            <person name="Butler J."/>
            <person name="Alvarez P."/>
            <person name="Gnerre S."/>
            <person name="Grabherr M."/>
            <person name="Kleber M."/>
            <person name="Mauceli E.W."/>
            <person name="Brockman W."/>
            <person name="Rounsley S."/>
            <person name="Young S.K."/>
            <person name="LaButti K."/>
            <person name="Pushparaj V."/>
            <person name="DeCaprio D."/>
            <person name="Crawford M."/>
            <person name="Koehrsen M."/>
            <person name="Engels R."/>
            <person name="Montgomery P."/>
            <person name="Pearson M."/>
            <person name="Howarth C."/>
            <person name="Larson L."/>
            <person name="Luoma S."/>
            <person name="White J."/>
            <person name="Alvarado L."/>
            <person name="Kodira C.D."/>
            <person name="Zeng Q."/>
            <person name="Oleary S."/>
            <person name="Yandava C."/>
            <person name="Denning D.W."/>
            <person name="Nierman W.C."/>
            <person name="Milne T."/>
            <person name="Madden K."/>
        </authorList>
    </citation>
    <scope>NUCLEOTIDE SEQUENCE [LARGE SCALE GENOMIC DNA]</scope>
    <source>
        <strain>NIH 2624 / FGSC A1156</strain>
    </source>
</reference>
<dbReference type="EC" id="3.2.1.67"/>
<dbReference type="EMBL" id="CH476610">
    <property type="protein sequence ID" value="EAU29354.1"/>
    <property type="molecule type" value="Genomic_DNA"/>
</dbReference>
<dbReference type="RefSeq" id="XP_001218705.1">
    <property type="nucleotide sequence ID" value="XM_001218704.1"/>
</dbReference>
<dbReference type="SMR" id="Q0C7H7"/>
<dbReference type="STRING" id="341663.Q0C7H7"/>
<dbReference type="GlyCosmos" id="Q0C7H7">
    <property type="glycosylation" value="9 sites, No reported glycans"/>
</dbReference>
<dbReference type="EnsemblFungi" id="EAU29354">
    <property type="protein sequence ID" value="EAU29354"/>
    <property type="gene ID" value="ATEG_10357"/>
</dbReference>
<dbReference type="GeneID" id="4354598"/>
<dbReference type="VEuPathDB" id="FungiDB:ATEG_10357"/>
<dbReference type="eggNOG" id="ENOG502QPPR">
    <property type="taxonomic scope" value="Eukaryota"/>
</dbReference>
<dbReference type="HOGENOM" id="CLU_016031_1_0_1"/>
<dbReference type="OMA" id="CRNVVNV"/>
<dbReference type="OrthoDB" id="187139at2759"/>
<dbReference type="Proteomes" id="UP000007963">
    <property type="component" value="Unassembled WGS sequence"/>
</dbReference>
<dbReference type="GO" id="GO:0005576">
    <property type="term" value="C:extracellular region"/>
    <property type="evidence" value="ECO:0000250"/>
    <property type="project" value="UniProtKB"/>
</dbReference>
<dbReference type="GO" id="GO:0047911">
    <property type="term" value="F:galacturan 1,4-alpha-galacturonidase activity"/>
    <property type="evidence" value="ECO:0007669"/>
    <property type="project" value="UniProtKB-EC"/>
</dbReference>
<dbReference type="GO" id="GO:0004650">
    <property type="term" value="F:polygalacturonase activity"/>
    <property type="evidence" value="ECO:0000250"/>
    <property type="project" value="UniProtKB"/>
</dbReference>
<dbReference type="GO" id="GO:0071555">
    <property type="term" value="P:cell wall organization"/>
    <property type="evidence" value="ECO:0007669"/>
    <property type="project" value="UniProtKB-KW"/>
</dbReference>
<dbReference type="GO" id="GO:0045490">
    <property type="term" value="P:pectin catabolic process"/>
    <property type="evidence" value="ECO:0000250"/>
    <property type="project" value="UniProtKB"/>
</dbReference>
<dbReference type="FunFam" id="2.160.20.10:FF:000040">
    <property type="entry name" value="Probable exopolygalacturonase B"/>
    <property type="match status" value="1"/>
</dbReference>
<dbReference type="Gene3D" id="2.160.20.10">
    <property type="entry name" value="Single-stranded right-handed beta-helix, Pectin lyase-like"/>
    <property type="match status" value="1"/>
</dbReference>
<dbReference type="InterPro" id="IPR000743">
    <property type="entry name" value="Glyco_hydro_28"/>
</dbReference>
<dbReference type="InterPro" id="IPR012334">
    <property type="entry name" value="Pectin_lyas_fold"/>
</dbReference>
<dbReference type="InterPro" id="IPR011050">
    <property type="entry name" value="Pectin_lyase_fold/virulence"/>
</dbReference>
<dbReference type="PANTHER" id="PTHR31736">
    <property type="match status" value="1"/>
</dbReference>
<dbReference type="PANTHER" id="PTHR31736:SF6">
    <property type="entry name" value="EXOPOLYGALACTURONASE B-RELATED"/>
    <property type="match status" value="1"/>
</dbReference>
<dbReference type="Pfam" id="PF00295">
    <property type="entry name" value="Glyco_hydro_28"/>
    <property type="match status" value="1"/>
</dbReference>
<dbReference type="SUPFAM" id="SSF51126">
    <property type="entry name" value="Pectin lyase-like"/>
    <property type="match status" value="1"/>
</dbReference>
<sequence>MKFFTAALFASAVSAFAVDSIIPGARVIPATDTLELQHVGAHHHKHPNRRTVTIRSSRNDTDDVSKDFLWGISRANHGGRLLLQKGKKYVIGKKLDLSFLNNIEVQLDGELKFTDDVPYWQKNNFYYSFQKSISFWRWGGQDIKIFGSGVLNGNGQRWYNEFAGQEILDPDNTFYRPILFVTENATRVSVEGITQLNSPCWTNFFVGSNDVSFDNVYIEAFSTNASALPKNTDGFDSYNVKGLSVTNTRVNVGDDCFSPKPNTTDIFVQNLWCNGTHGVSMGSIGQYPGVMDIIEHAYIENVTLLNGQNGARLKAWAGENVGYGRINNITYKNIRIENTDKPVVLDQCYFNVDTATCAEYPSSVNITNITFENVYGTSSGKEGKVVADLVCSPNAVCSDIHLADIDLTSPAGSPPVIICEGIQGDIGVECQSSTS</sequence>
<gene>
    <name type="primary">pgxB</name>
    <name type="ORF">ATEG_10357</name>
</gene>
<proteinExistence type="inferred from homology"/>
<comment type="function">
    <text evidence="1">Specific in hydrolyzing the terminal glycosidic bond of polygalacturonic acid and oligogalacturonates.</text>
</comment>
<comment type="catalytic activity">
    <reaction>
        <text>[(1-&gt;4)-alpha-D-galacturonosyl](n) + H2O = alpha-D-galacturonate + [(1-&gt;4)-alpha-D-galacturonosyl](n-1)</text>
        <dbReference type="Rhea" id="RHEA:14117"/>
        <dbReference type="Rhea" id="RHEA-COMP:14570"/>
        <dbReference type="Rhea" id="RHEA-COMP:14572"/>
        <dbReference type="ChEBI" id="CHEBI:15377"/>
        <dbReference type="ChEBI" id="CHEBI:58658"/>
        <dbReference type="ChEBI" id="CHEBI:140523"/>
        <dbReference type="EC" id="3.2.1.67"/>
    </reaction>
</comment>
<comment type="subcellular location">
    <subcellularLocation>
        <location evidence="1">Secreted</location>
    </subcellularLocation>
</comment>
<comment type="similarity">
    <text evidence="3">Belongs to the glycosyl hydrolase 28 family.</text>
</comment>
<protein>
    <recommendedName>
        <fullName>Probable exopolygalacturonase B</fullName>
        <ecNumber>3.2.1.67</ecNumber>
    </recommendedName>
    <alternativeName>
        <fullName>Galacturan 1,4-alpha-galacturonidase B</fullName>
    </alternativeName>
    <alternativeName>
        <fullName>Poly(1,4-alpha-D-galacturonide)galacturonohydrolase B</fullName>
    </alternativeName>
</protein>
<feature type="signal peptide" evidence="2">
    <location>
        <begin position="1"/>
        <end position="15"/>
    </location>
</feature>
<feature type="chain" id="PRO_0000393680" description="Probable exopolygalacturonase B">
    <location>
        <begin position="16"/>
        <end position="435"/>
    </location>
</feature>
<feature type="active site" description="Proton donor" evidence="1">
    <location>
        <position position="254"/>
    </location>
</feature>
<feature type="active site" evidence="1">
    <location>
        <position position="277"/>
    </location>
</feature>
<feature type="glycosylation site" description="N-linked (GlcNAc...) asparagine" evidence="2">
    <location>
        <position position="59"/>
    </location>
</feature>
<feature type="glycosylation site" description="N-linked (GlcNAc...) asparagine" evidence="2">
    <location>
        <position position="184"/>
    </location>
</feature>
<feature type="glycosylation site" description="N-linked (GlcNAc...) asparagine" evidence="2">
    <location>
        <position position="224"/>
    </location>
</feature>
<feature type="glycosylation site" description="N-linked (GlcNAc...) asparagine" evidence="2">
    <location>
        <position position="262"/>
    </location>
</feature>
<feature type="glycosylation site" description="N-linked (GlcNAc...) asparagine" evidence="2">
    <location>
        <position position="274"/>
    </location>
</feature>
<feature type="glycosylation site" description="N-linked (GlcNAc...) asparagine" evidence="2">
    <location>
        <position position="301"/>
    </location>
</feature>
<feature type="glycosylation site" description="N-linked (GlcNAc...) asparagine" evidence="2">
    <location>
        <position position="328"/>
    </location>
</feature>
<feature type="glycosylation site" description="N-linked (GlcNAc...) asparagine" evidence="2">
    <location>
        <position position="365"/>
    </location>
</feature>
<feature type="glycosylation site" description="N-linked (GlcNAc...) asparagine" evidence="2">
    <location>
        <position position="368"/>
    </location>
</feature>
<feature type="disulfide bond" evidence="1">
    <location>
        <begin position="256"/>
        <end position="273"/>
    </location>
</feature>
<feature type="disulfide bond" evidence="1">
    <location>
        <begin position="391"/>
        <end position="397"/>
    </location>
</feature>
<evidence type="ECO:0000250" key="1"/>
<evidence type="ECO:0000255" key="2"/>
<evidence type="ECO:0000305" key="3"/>
<name>PGXB_ASPTN</name>